<dbReference type="EC" id="2.4.2.30" evidence="2"/>
<dbReference type="EC" id="2.4.2.-" evidence="2"/>
<dbReference type="EMBL" id="D16482">
    <property type="protein sequence ID" value="BAA03943.1"/>
    <property type="molecule type" value="mRNA"/>
</dbReference>
<dbReference type="PIR" id="S42208">
    <property type="entry name" value="S42208"/>
</dbReference>
<dbReference type="SMR" id="Q11208"/>
<dbReference type="GO" id="GO:0005730">
    <property type="term" value="C:nucleolus"/>
    <property type="evidence" value="ECO:0007669"/>
    <property type="project" value="TreeGrafter"/>
</dbReference>
<dbReference type="GO" id="GO:0003677">
    <property type="term" value="F:DNA binding"/>
    <property type="evidence" value="ECO:0007669"/>
    <property type="project" value="UniProtKB-KW"/>
</dbReference>
<dbReference type="GO" id="GO:0051287">
    <property type="term" value="F:NAD binding"/>
    <property type="evidence" value="ECO:0007669"/>
    <property type="project" value="InterPro"/>
</dbReference>
<dbReference type="GO" id="GO:0003950">
    <property type="term" value="F:NAD+ poly-ADP-ribosyltransferase activity"/>
    <property type="evidence" value="ECO:0007669"/>
    <property type="project" value="UniProtKB-EC"/>
</dbReference>
<dbReference type="GO" id="GO:0140806">
    <property type="term" value="F:NAD+-protein-aspartate ADP-ribosyltransferase activity"/>
    <property type="evidence" value="ECO:0007669"/>
    <property type="project" value="RHEA"/>
</dbReference>
<dbReference type="GO" id="GO:0140807">
    <property type="term" value="F:NAD+-protein-glutamate ADP-ribosyltransferase activity"/>
    <property type="evidence" value="ECO:0007669"/>
    <property type="project" value="RHEA"/>
</dbReference>
<dbReference type="GO" id="GO:0016779">
    <property type="term" value="F:nucleotidyltransferase activity"/>
    <property type="evidence" value="ECO:0007669"/>
    <property type="project" value="UniProtKB-KW"/>
</dbReference>
<dbReference type="GO" id="GO:0008270">
    <property type="term" value="F:zinc ion binding"/>
    <property type="evidence" value="ECO:0007669"/>
    <property type="project" value="UniProtKB-KW"/>
</dbReference>
<dbReference type="GO" id="GO:0006302">
    <property type="term" value="P:double-strand break repair"/>
    <property type="evidence" value="ECO:0007669"/>
    <property type="project" value="TreeGrafter"/>
</dbReference>
<dbReference type="GO" id="GO:0070212">
    <property type="term" value="P:protein poly-ADP-ribosylation"/>
    <property type="evidence" value="ECO:0007669"/>
    <property type="project" value="TreeGrafter"/>
</dbReference>
<dbReference type="CDD" id="cd17747">
    <property type="entry name" value="BRCT_PARP1"/>
    <property type="match status" value="1"/>
</dbReference>
<dbReference type="CDD" id="cd02688">
    <property type="entry name" value="E_set"/>
    <property type="match status" value="1"/>
</dbReference>
<dbReference type="CDD" id="cd01437">
    <property type="entry name" value="parp_like"/>
    <property type="match status" value="1"/>
</dbReference>
<dbReference type="CDD" id="cd08001">
    <property type="entry name" value="WGR_PARP1_like"/>
    <property type="match status" value="1"/>
</dbReference>
<dbReference type="FunFam" id="1.20.142.10:FF:000001">
    <property type="entry name" value="Poly [ADP-ribose] polymerase"/>
    <property type="match status" value="1"/>
</dbReference>
<dbReference type="FunFam" id="3.90.228.10:FF:000002">
    <property type="entry name" value="Poly [ADP-ribose] polymerase"/>
    <property type="match status" value="1"/>
</dbReference>
<dbReference type="Gene3D" id="1.10.20.130">
    <property type="match status" value="1"/>
</dbReference>
<dbReference type="Gene3D" id="2.20.25.630">
    <property type="match status" value="1"/>
</dbReference>
<dbReference type="Gene3D" id="3.90.228.10">
    <property type="match status" value="1"/>
</dbReference>
<dbReference type="Gene3D" id="3.40.50.10190">
    <property type="entry name" value="BRCT domain"/>
    <property type="match status" value="1"/>
</dbReference>
<dbReference type="Gene3D" id="1.20.142.10">
    <property type="entry name" value="Poly(ADP-ribose) polymerase, regulatory domain"/>
    <property type="match status" value="1"/>
</dbReference>
<dbReference type="Gene3D" id="3.30.1740.10">
    <property type="entry name" value="Zinc finger, PARP-type"/>
    <property type="match status" value="2"/>
</dbReference>
<dbReference type="InterPro" id="IPR050800">
    <property type="entry name" value="ARTD/PARP"/>
</dbReference>
<dbReference type="InterPro" id="IPR001357">
    <property type="entry name" value="BRCT_dom"/>
</dbReference>
<dbReference type="InterPro" id="IPR036420">
    <property type="entry name" value="BRCT_dom_sf"/>
</dbReference>
<dbReference type="InterPro" id="IPR038650">
    <property type="entry name" value="PADR1_C_dom_sf"/>
</dbReference>
<dbReference type="InterPro" id="IPR008288">
    <property type="entry name" value="PARP"/>
</dbReference>
<dbReference type="InterPro" id="IPR049296">
    <property type="entry name" value="PARP1-like_PADR1_N"/>
</dbReference>
<dbReference type="InterPro" id="IPR012982">
    <property type="entry name" value="PARP1-like_PADR1_Zn_ribbon"/>
</dbReference>
<dbReference type="InterPro" id="IPR012317">
    <property type="entry name" value="Poly(ADP-ribose)pol_cat_dom"/>
</dbReference>
<dbReference type="InterPro" id="IPR004102">
    <property type="entry name" value="Poly(ADP-ribose)pol_reg_dom"/>
</dbReference>
<dbReference type="InterPro" id="IPR036616">
    <property type="entry name" value="Poly(ADP-ribose)pol_reg_dom_sf"/>
</dbReference>
<dbReference type="InterPro" id="IPR036930">
    <property type="entry name" value="WGR_dom_sf"/>
</dbReference>
<dbReference type="InterPro" id="IPR008893">
    <property type="entry name" value="WGR_domain"/>
</dbReference>
<dbReference type="InterPro" id="IPR001510">
    <property type="entry name" value="Znf_PARP"/>
</dbReference>
<dbReference type="InterPro" id="IPR036957">
    <property type="entry name" value="Znf_PARP_sf"/>
</dbReference>
<dbReference type="PANTHER" id="PTHR10459">
    <property type="entry name" value="DNA LIGASE"/>
    <property type="match status" value="1"/>
</dbReference>
<dbReference type="PANTHER" id="PTHR10459:SF60">
    <property type="entry name" value="POLY [ADP-RIBOSE] POLYMERASE 2"/>
    <property type="match status" value="1"/>
</dbReference>
<dbReference type="Pfam" id="PF00533">
    <property type="entry name" value="BRCT"/>
    <property type="match status" value="1"/>
</dbReference>
<dbReference type="Pfam" id="PF21728">
    <property type="entry name" value="PADR1_N"/>
    <property type="match status" value="1"/>
</dbReference>
<dbReference type="Pfam" id="PF00644">
    <property type="entry name" value="PARP"/>
    <property type="match status" value="1"/>
</dbReference>
<dbReference type="Pfam" id="PF02877">
    <property type="entry name" value="PARP_reg"/>
    <property type="match status" value="1"/>
</dbReference>
<dbReference type="Pfam" id="PF05406">
    <property type="entry name" value="WGR"/>
    <property type="match status" value="1"/>
</dbReference>
<dbReference type="Pfam" id="PF00645">
    <property type="entry name" value="zf-PARP"/>
    <property type="match status" value="2"/>
</dbReference>
<dbReference type="Pfam" id="PF08063">
    <property type="entry name" value="Zn_ribbon_PADR1"/>
    <property type="match status" value="1"/>
</dbReference>
<dbReference type="PIRSF" id="PIRSF000489">
    <property type="entry name" value="NAD_ADPRT"/>
    <property type="match status" value="1"/>
</dbReference>
<dbReference type="SMART" id="SM00292">
    <property type="entry name" value="BRCT"/>
    <property type="match status" value="1"/>
</dbReference>
<dbReference type="SMART" id="SM01335">
    <property type="entry name" value="PADR1"/>
    <property type="match status" value="1"/>
</dbReference>
<dbReference type="SMART" id="SM00773">
    <property type="entry name" value="WGR"/>
    <property type="match status" value="1"/>
</dbReference>
<dbReference type="SMART" id="SM01336">
    <property type="entry name" value="zf-PARP"/>
    <property type="match status" value="2"/>
</dbReference>
<dbReference type="SUPFAM" id="SSF56399">
    <property type="entry name" value="ADP-ribosylation"/>
    <property type="match status" value="1"/>
</dbReference>
<dbReference type="SUPFAM" id="SSF52113">
    <property type="entry name" value="BRCT domain"/>
    <property type="match status" value="1"/>
</dbReference>
<dbReference type="SUPFAM" id="SSF47587">
    <property type="entry name" value="Domain of poly(ADP-ribose) polymerase"/>
    <property type="match status" value="1"/>
</dbReference>
<dbReference type="SUPFAM" id="SSF57716">
    <property type="entry name" value="Glucocorticoid receptor-like (DNA-binding domain)"/>
    <property type="match status" value="2"/>
</dbReference>
<dbReference type="SUPFAM" id="SSF142921">
    <property type="entry name" value="WGR domain-like"/>
    <property type="match status" value="1"/>
</dbReference>
<dbReference type="PROSITE" id="PS50172">
    <property type="entry name" value="BRCT"/>
    <property type="match status" value="1"/>
</dbReference>
<dbReference type="PROSITE" id="PS52007">
    <property type="entry name" value="PADR1"/>
    <property type="match status" value="1"/>
</dbReference>
<dbReference type="PROSITE" id="PS51060">
    <property type="entry name" value="PARP_ALPHA_HD"/>
    <property type="match status" value="1"/>
</dbReference>
<dbReference type="PROSITE" id="PS51059">
    <property type="entry name" value="PARP_CATALYTIC"/>
    <property type="match status" value="1"/>
</dbReference>
<dbReference type="PROSITE" id="PS51977">
    <property type="entry name" value="WGR"/>
    <property type="match status" value="1"/>
</dbReference>
<dbReference type="PROSITE" id="PS00347">
    <property type="entry name" value="ZF_PARP_1"/>
    <property type="match status" value="1"/>
</dbReference>
<dbReference type="PROSITE" id="PS50064">
    <property type="entry name" value="ZF_PARP_2"/>
    <property type="match status" value="2"/>
</dbReference>
<feature type="chain" id="PRO_0000211326" description="Poly [ADP-ribose] polymerase">
    <location>
        <begin position="1"/>
        <end position="996"/>
    </location>
</feature>
<feature type="domain" description="PADR1 zinc-binding" evidence="8">
    <location>
        <begin position="220"/>
        <end position="358"/>
    </location>
</feature>
<feature type="domain" description="BRCT" evidence="3">
    <location>
        <begin position="382"/>
        <end position="473"/>
    </location>
</feature>
<feature type="domain" description="WGR" evidence="7">
    <location>
        <begin position="527"/>
        <end position="625"/>
    </location>
</feature>
<feature type="domain" description="PARP alpha-helical" evidence="6">
    <location>
        <begin position="647"/>
        <end position="764"/>
    </location>
</feature>
<feature type="domain" description="PARP catalytic" evidence="5">
    <location>
        <begin position="773"/>
        <end position="996"/>
    </location>
</feature>
<feature type="DNA-binding region" evidence="1">
    <location>
        <begin position="1"/>
        <end position="369"/>
    </location>
</feature>
<feature type="zinc finger region" description="PARP-type 1" evidence="4">
    <location>
        <begin position="7"/>
        <end position="89"/>
    </location>
</feature>
<feature type="zinc finger region" description="PARP-type 2" evidence="4">
    <location>
        <begin position="114"/>
        <end position="203"/>
    </location>
</feature>
<feature type="region of interest" description="Zinc ribbon" evidence="8">
    <location>
        <begin position="286"/>
        <end position="329"/>
    </location>
</feature>
<feature type="region of interest" description="Automodification domain">
    <location>
        <begin position="370"/>
        <end position="507"/>
    </location>
</feature>
<feature type="short sequence motif" description="Nuclear localization signal">
    <location>
        <begin position="211"/>
        <end position="214"/>
    </location>
</feature>
<feature type="short sequence motif" description="Nuclear localization signal">
    <location>
        <begin position="232"/>
        <end position="235"/>
    </location>
</feature>
<feature type="binding site" evidence="4">
    <location>
        <position position="19"/>
    </location>
    <ligand>
        <name>Zn(2+)</name>
        <dbReference type="ChEBI" id="CHEBI:29105"/>
        <label>1</label>
    </ligand>
</feature>
<feature type="binding site" evidence="4">
    <location>
        <position position="22"/>
    </location>
    <ligand>
        <name>Zn(2+)</name>
        <dbReference type="ChEBI" id="CHEBI:29105"/>
        <label>1</label>
    </ligand>
</feature>
<feature type="binding site" evidence="4">
    <location>
        <position position="51"/>
    </location>
    <ligand>
        <name>Zn(2+)</name>
        <dbReference type="ChEBI" id="CHEBI:29105"/>
        <label>1</label>
    </ligand>
</feature>
<feature type="binding site" evidence="4">
    <location>
        <position position="54"/>
    </location>
    <ligand>
        <name>Zn(2+)</name>
        <dbReference type="ChEBI" id="CHEBI:29105"/>
        <label>1</label>
    </ligand>
</feature>
<feature type="binding site" evidence="4">
    <location>
        <position position="126"/>
    </location>
    <ligand>
        <name>Zn(2+)</name>
        <dbReference type="ChEBI" id="CHEBI:29105"/>
        <label>2</label>
    </ligand>
</feature>
<feature type="binding site" evidence="4">
    <location>
        <position position="129"/>
    </location>
    <ligand>
        <name>Zn(2+)</name>
        <dbReference type="ChEBI" id="CHEBI:29105"/>
        <label>2</label>
    </ligand>
</feature>
<feature type="binding site" evidence="4">
    <location>
        <position position="161"/>
    </location>
    <ligand>
        <name>Zn(2+)</name>
        <dbReference type="ChEBI" id="CHEBI:29105"/>
        <label>2</label>
    </ligand>
</feature>
<feature type="binding site" evidence="4">
    <location>
        <position position="164"/>
    </location>
    <ligand>
        <name>Zn(2+)</name>
        <dbReference type="ChEBI" id="CHEBI:29105"/>
        <label>2</label>
    </ligand>
</feature>
<feature type="binding site" evidence="8">
    <location>
        <position position="291"/>
    </location>
    <ligand>
        <name>Zn(2+)</name>
        <dbReference type="ChEBI" id="CHEBI:29105"/>
        <label>3</label>
    </ligand>
</feature>
<feature type="binding site" evidence="8">
    <location>
        <position position="294"/>
    </location>
    <ligand>
        <name>Zn(2+)</name>
        <dbReference type="ChEBI" id="CHEBI:29105"/>
        <label>3</label>
    </ligand>
</feature>
<feature type="binding site" evidence="8">
    <location>
        <position position="308"/>
    </location>
    <ligand>
        <name>Zn(2+)</name>
        <dbReference type="ChEBI" id="CHEBI:29105"/>
        <label>3</label>
    </ligand>
</feature>
<feature type="binding site" evidence="8">
    <location>
        <position position="318"/>
    </location>
    <ligand>
        <name>Zn(2+)</name>
        <dbReference type="ChEBI" id="CHEBI:29105"/>
        <label>3</label>
    </ligand>
</feature>
<organism>
    <name type="scientific">Sarcophaga peregrina</name>
    <name type="common">Flesh fly</name>
    <name type="synonym">Boettcherisca peregrina</name>
    <dbReference type="NCBI Taxonomy" id="7386"/>
    <lineage>
        <taxon>Eukaryota</taxon>
        <taxon>Metazoa</taxon>
        <taxon>Ecdysozoa</taxon>
        <taxon>Arthropoda</taxon>
        <taxon>Hexapoda</taxon>
        <taxon>Insecta</taxon>
        <taxon>Pterygota</taxon>
        <taxon>Neoptera</taxon>
        <taxon>Endopterygota</taxon>
        <taxon>Diptera</taxon>
        <taxon>Brachycera</taxon>
        <taxon>Muscomorpha</taxon>
        <taxon>Oestroidea</taxon>
        <taxon>Sarcophagidae</taxon>
        <taxon>Sarcophaga</taxon>
        <taxon>Boettcherisca</taxon>
    </lineage>
</organism>
<comment type="function">
    <text evidence="2">Poly-ADP-ribosyltransferase that mediates poly-ADP-ribosylation of proteins and plays a key role in DNA repair. Mainly mediates glutamate and aspartate ADP-ribosylation of target proteins: the ADP-D-ribosyl group of NAD(+) is transferred to the acceptor carboxyl group of glutamate and aspartate residues and further ADP-ribosyl groups are transferred to the 2'-position of the terminal adenosine moiety, building up a polymer with an average chain length of 20-30 units.</text>
</comment>
<comment type="catalytic activity">
    <reaction evidence="2">
        <text>NAD(+) + (ADP-D-ribosyl)n-acceptor = nicotinamide + (ADP-D-ribosyl)n+1-acceptor + H(+).</text>
        <dbReference type="EC" id="2.4.2.30"/>
    </reaction>
</comment>
<comment type="catalytic activity">
    <reaction evidence="2">
        <text>L-aspartyl-[protein] + NAD(+) = 4-O-(ADP-D-ribosyl)-L-aspartyl-[protein] + nicotinamide</text>
        <dbReference type="Rhea" id="RHEA:54424"/>
        <dbReference type="Rhea" id="RHEA-COMP:9867"/>
        <dbReference type="Rhea" id="RHEA-COMP:13832"/>
        <dbReference type="ChEBI" id="CHEBI:17154"/>
        <dbReference type="ChEBI" id="CHEBI:29961"/>
        <dbReference type="ChEBI" id="CHEBI:57540"/>
        <dbReference type="ChEBI" id="CHEBI:138102"/>
    </reaction>
</comment>
<comment type="catalytic activity">
    <reaction evidence="2">
        <text>L-glutamyl-[protein] + NAD(+) = 5-O-(ADP-D-ribosyl)-L-glutamyl-[protein] + nicotinamide</text>
        <dbReference type="Rhea" id="RHEA:58224"/>
        <dbReference type="Rhea" id="RHEA-COMP:10208"/>
        <dbReference type="Rhea" id="RHEA-COMP:15089"/>
        <dbReference type="ChEBI" id="CHEBI:17154"/>
        <dbReference type="ChEBI" id="CHEBI:29973"/>
        <dbReference type="ChEBI" id="CHEBI:57540"/>
        <dbReference type="ChEBI" id="CHEBI:142540"/>
    </reaction>
</comment>
<comment type="subcellular location">
    <subcellularLocation>
        <location>Nucleus</location>
    </subcellularLocation>
</comment>
<comment type="miscellaneous">
    <text>The ADP-D-ribosyl group of NAD(+) is transferred to an acceptor carboxyl group on a histone or the enzyme itself, and further ADP-ribosyl groups are transferred to the 2'-position of the terminal adenosine moiety, building up a polymer with an average chain length of 20-30 units.</text>
</comment>
<comment type="similarity">
    <text evidence="8">Belongs to the ARTD/PARP family.</text>
</comment>
<reference key="1">
    <citation type="journal article" date="1994" name="Eur. J. Biochem.">
        <title>Cloning and functional expression of poly(ADP-ribose) polymerase cDNA from Sarcophaga peregrina.</title>
        <authorList>
            <person name="Masutani M."/>
            <person name="Nozaki T."/>
            <person name="Hitomi Y."/>
            <person name="Ikejima M."/>
            <person name="Nagasaki K."/>
            <person name="de Prati A.C."/>
            <person name="Kurata S."/>
            <person name="Natori S."/>
            <person name="Sugimura T."/>
            <person name="Esumi H."/>
        </authorList>
    </citation>
    <scope>NUCLEOTIDE SEQUENCE [MRNA]</scope>
    <scope>PARTIAL PROTEIN SEQUENCE</scope>
</reference>
<proteinExistence type="evidence at protein level"/>
<protein>
    <recommendedName>
        <fullName>Poly [ADP-ribose] polymerase</fullName>
        <shortName>PARP</shortName>
        <ecNumber evidence="2">2.4.2.30</ecNumber>
    </recommendedName>
    <alternativeName>
        <fullName>NAD(+) ADP-ribosyltransferase</fullName>
        <shortName>ADPRT</shortName>
    </alternativeName>
    <alternativeName>
        <fullName>Poly[ADP-ribose] synthase</fullName>
    </alternativeName>
    <alternativeName>
        <fullName evidence="2">Protein ADP-ribosyltransferase</fullName>
        <ecNumber evidence="2">2.4.2.-</ecNumber>
    </alternativeName>
</protein>
<evidence type="ECO:0000250" key="1"/>
<evidence type="ECO:0000250" key="2">
    <source>
        <dbReference type="UniProtKB" id="P09874"/>
    </source>
</evidence>
<evidence type="ECO:0000255" key="3">
    <source>
        <dbReference type="PROSITE-ProRule" id="PRU00033"/>
    </source>
</evidence>
<evidence type="ECO:0000255" key="4">
    <source>
        <dbReference type="PROSITE-ProRule" id="PRU00264"/>
    </source>
</evidence>
<evidence type="ECO:0000255" key="5">
    <source>
        <dbReference type="PROSITE-ProRule" id="PRU00397"/>
    </source>
</evidence>
<evidence type="ECO:0000255" key="6">
    <source>
        <dbReference type="PROSITE-ProRule" id="PRU00398"/>
    </source>
</evidence>
<evidence type="ECO:0000255" key="7">
    <source>
        <dbReference type="PROSITE-ProRule" id="PRU01321"/>
    </source>
</evidence>
<evidence type="ECO:0000255" key="8">
    <source>
        <dbReference type="PROSITE-ProRule" id="PRU01351"/>
    </source>
</evidence>
<accession>Q11208</accession>
<sequence>MEIDLPFKVEYSKSSRASCKGCKNKIEAGILRIAAMVQSAFHDGKQPNWFHEQCFFQKQRPTSAGDIENFENIRFEDQERIKKAIDNCTTVISAGGSKKGAKRSKGENNAIKDFGIEYAKSGRASCRGCEQKILKDQIRIRKTVFDTEVGMKYGGQPLWHHVECFAQLRGELGWLDTGENLPGFQTLKSDDKADVKKALPVIKDEGVSSAKKAKIEKIDEEDAASIKELTEKIKKQSKRLFKFRDEIKNEMSKDDMVALLEANNMEPVKGDSEKLLDQVADLLTFGALLPCTDCKGRQLLFHKSGYLCNGDLTEWTKCTKLLKEPERKSCKIPGYLKYKFLKDVRKNPEVRAIRYIPPSTSTILKNISLKKGDELDGPKVKRERPPLYNIEIALIAPKEREGIVKDRISKLGGTVSTKITEKTTVVLSTPEEVERMSSRMKKAKTLGLHVIPEDYLEAVEQNGAGAINYISSMSLCDWGTDPATRITQEESKSSKSKSIYTKSVPKSMTLKIKDGLAVDPDSGLEDVAHVYVSRNKEKYNVVLGITDIQKNKNSFYKLQLLESDMKNRFWVFRSWGRIGTTIGGNKLDNFSNLVDAIVQFKELYLEKSGNHFENRENFVKVAGRMYPIDIDYAEDSKIDLSAEHDIKSKLPLSVQDIIKLMFDVDSMKRTMMEFDLDMEKMPLGKLSQKQIQSAYKVLTEIYELIQGGGTNAKFIDATNRFYTLIPHNFGTQSPPLLDTTEQVEQLRQMLDSLIEIECAYSLLQTEDSKADINPIDKHYEQLKTKLEPLDKNSEEYILLQKYVKNTHAETHKLYDLEVVDIFKVARQGEARRYKPFKKLHNRRLLWHGSRLTNFAGILSHGLKIAPPEAPVTGYMFGKGIYFADMVSKSANYCCTSHHNSTGLMLLSEVALGDMMECTAAKYVTKLPNDKHSCFGRGRTMPNPSESIIREDGVEIPLGKPITNDSLKSSLLYNEFIIYDIAQVNIQYMLRMNFKYK</sequence>
<keyword id="KW-0013">ADP-ribosylation</keyword>
<keyword id="KW-0903">Direct protein sequencing</keyword>
<keyword id="KW-0238">DNA-binding</keyword>
<keyword id="KW-0328">Glycosyltransferase</keyword>
<keyword id="KW-0479">Metal-binding</keyword>
<keyword id="KW-0520">NAD</keyword>
<keyword id="KW-0548">Nucleotidyltransferase</keyword>
<keyword id="KW-0539">Nucleus</keyword>
<keyword id="KW-0677">Repeat</keyword>
<keyword id="KW-0808">Transferase</keyword>
<keyword id="KW-0862">Zinc</keyword>
<keyword id="KW-0863">Zinc-finger</keyword>
<name>PARP_SARPE</name>